<organism>
    <name type="scientific">Striatophasma naukluftense</name>
    <name type="common">Gladiator</name>
    <name type="synonym">Heel-walker</name>
    <dbReference type="NCBI Taxonomy" id="1041429"/>
    <lineage>
        <taxon>Eukaryota</taxon>
        <taxon>Metazoa</taxon>
        <taxon>Ecdysozoa</taxon>
        <taxon>Arthropoda</taxon>
        <taxon>Hexapoda</taxon>
        <taxon>Insecta</taxon>
        <taxon>Pterygota</taxon>
        <taxon>Neoptera</taxon>
        <taxon>Polyneoptera</taxon>
        <taxon>Mantophasmatodea</taxon>
        <taxon>Austrophasmatidae</taxon>
        <taxon>Striatophasma</taxon>
    </lineage>
</organism>
<comment type="function">
    <text evidence="1">FMRFamides and FMRFamide-like peptides are neuropeptides.</text>
</comment>
<comment type="subcellular location">
    <subcellularLocation>
        <location evidence="6">Secreted</location>
    </subcellularLocation>
</comment>
<comment type="similarity">
    <text evidence="2">Belongs to the FARP (FMRF amide related peptide) family.</text>
</comment>
<name>FAR8_STRNA</name>
<accession>B0M3B1</accession>
<dbReference type="GO" id="GO:0005576">
    <property type="term" value="C:extracellular region"/>
    <property type="evidence" value="ECO:0007669"/>
    <property type="project" value="UniProtKB-SubCell"/>
</dbReference>
<dbReference type="GO" id="GO:0007218">
    <property type="term" value="P:neuropeptide signaling pathway"/>
    <property type="evidence" value="ECO:0007669"/>
    <property type="project" value="UniProtKB-KW"/>
</dbReference>
<reference evidence="5" key="1">
    <citation type="journal article" date="2012" name="Syst. Biol.">
        <title>Peptidomics-based phylogeny and biogeography of Mantophasmatodea (Hexapoda).</title>
        <authorList>
            <person name="Predel R."/>
            <person name="Neupert S."/>
            <person name="Huetteroth W."/>
            <person name="Kahnt J."/>
            <person name="Waidelich D."/>
            <person name="Roth S."/>
        </authorList>
    </citation>
    <scope>PROTEIN SEQUENCE</scope>
    <scope>AMIDATION AT LEU-9</scope>
    <source>
        <tissue evidence="3">Thoracic perisympathetic organs</tissue>
    </source>
</reference>
<feature type="peptide" id="PRO_0000420745" description="Extended FMRFamide-8" evidence="3">
    <location>
        <begin position="1"/>
        <end position="9"/>
    </location>
</feature>
<feature type="modified residue" description="Leucine amide" evidence="3">
    <location>
        <position position="9"/>
    </location>
</feature>
<feature type="unsure residue" description="L or I" evidence="3">
    <location>
        <position position="9"/>
    </location>
</feature>
<evidence type="ECO:0000250" key="1">
    <source>
        <dbReference type="UniProtKB" id="P34405"/>
    </source>
</evidence>
<evidence type="ECO:0000255" key="2"/>
<evidence type="ECO:0000269" key="3">
    <source>
    </source>
</evidence>
<evidence type="ECO:0000303" key="4">
    <source>
    </source>
</evidence>
<evidence type="ECO:0000305" key="5"/>
<evidence type="ECO:0000305" key="6">
    <source>
    </source>
</evidence>
<protein>
    <recommendedName>
        <fullName evidence="4">Extended FMRFamide-8</fullName>
        <shortName evidence="4">FMRFa-8</shortName>
    </recommendedName>
</protein>
<proteinExistence type="evidence at protein level"/>
<keyword id="KW-0027">Amidation</keyword>
<keyword id="KW-0903">Direct protein sequencing</keyword>
<keyword id="KW-0527">Neuropeptide</keyword>
<keyword id="KW-0964">Secreted</keyword>
<sequence length="9" mass="1077">ARSDNFVRL</sequence>